<sequence>MSVPAFIDISEEDQAAELRAYLKSKGAELSEENSEGGLHVDLAQIIEACDVCLKEDDKDVESVMNSVVSLLLILEPDKQEALIESLCEKLVKFREGERPSLRLQLLSNLFHGMDKNTPVRYTVYCSLIKVAASCGAIQYIPTELDQVRKWISDWKLTTEKKHTLLRLLYEALVDCKKSDAASKVMVELLGSYTEDNASQARVDAHRCIVRALKDPNAFLFDHLLTLKPVKFLEGELIHDLLTIFVSAKLASYVKFYQNNKDFIDSLGLLHEQNMAKMRLLTFMGMAVENKEISFDTMQQELQIGADDVEAFVIDAVRTKMVYCKIDQTQRKVVVSHSTHRTFGKQQWQQLYDTLNAWKQNLNKVKNSLLSLSDT</sequence>
<evidence type="ECO:0000250" key="1">
    <source>
        <dbReference type="UniProtKB" id="Q7L2H7"/>
    </source>
</evidence>
<evidence type="ECO:0000255" key="2">
    <source>
        <dbReference type="HAMAP-Rule" id="MF_03012"/>
    </source>
</evidence>
<evidence type="ECO:0000255" key="3">
    <source>
        <dbReference type="PROSITE-ProRule" id="PRU01185"/>
    </source>
</evidence>
<evidence type="ECO:0000305" key="4"/>
<proteinExistence type="evidence at protein level"/>
<protein>
    <recommendedName>
        <fullName evidence="2">Eukaryotic translation initiation factor 3 subunit M</fullName>
        <shortName evidence="2">eIF3m</shortName>
    </recommendedName>
    <alternativeName>
        <fullName>PCI domain-containing protein 1</fullName>
    </alternativeName>
</protein>
<accession>Q99JX4</accession>
<accession>Q3TI04</accession>
<accession>Q5EBI5</accession>
<reference key="1">
    <citation type="journal article" date="2005" name="Science">
        <title>The transcriptional landscape of the mammalian genome.</title>
        <authorList>
            <person name="Carninci P."/>
            <person name="Kasukawa T."/>
            <person name="Katayama S."/>
            <person name="Gough J."/>
            <person name="Frith M.C."/>
            <person name="Maeda N."/>
            <person name="Oyama R."/>
            <person name="Ravasi T."/>
            <person name="Lenhard B."/>
            <person name="Wells C."/>
            <person name="Kodzius R."/>
            <person name="Shimokawa K."/>
            <person name="Bajic V.B."/>
            <person name="Brenner S.E."/>
            <person name="Batalov S."/>
            <person name="Forrest A.R."/>
            <person name="Zavolan M."/>
            <person name="Davis M.J."/>
            <person name="Wilming L.G."/>
            <person name="Aidinis V."/>
            <person name="Allen J.E."/>
            <person name="Ambesi-Impiombato A."/>
            <person name="Apweiler R."/>
            <person name="Aturaliya R.N."/>
            <person name="Bailey T.L."/>
            <person name="Bansal M."/>
            <person name="Baxter L."/>
            <person name="Beisel K.W."/>
            <person name="Bersano T."/>
            <person name="Bono H."/>
            <person name="Chalk A.M."/>
            <person name="Chiu K.P."/>
            <person name="Choudhary V."/>
            <person name="Christoffels A."/>
            <person name="Clutterbuck D.R."/>
            <person name="Crowe M.L."/>
            <person name="Dalla E."/>
            <person name="Dalrymple B.P."/>
            <person name="de Bono B."/>
            <person name="Della Gatta G."/>
            <person name="di Bernardo D."/>
            <person name="Down T."/>
            <person name="Engstrom P."/>
            <person name="Fagiolini M."/>
            <person name="Faulkner G."/>
            <person name="Fletcher C.F."/>
            <person name="Fukushima T."/>
            <person name="Furuno M."/>
            <person name="Futaki S."/>
            <person name="Gariboldi M."/>
            <person name="Georgii-Hemming P."/>
            <person name="Gingeras T.R."/>
            <person name="Gojobori T."/>
            <person name="Green R.E."/>
            <person name="Gustincich S."/>
            <person name="Harbers M."/>
            <person name="Hayashi Y."/>
            <person name="Hensch T.K."/>
            <person name="Hirokawa N."/>
            <person name="Hill D."/>
            <person name="Huminiecki L."/>
            <person name="Iacono M."/>
            <person name="Ikeo K."/>
            <person name="Iwama A."/>
            <person name="Ishikawa T."/>
            <person name="Jakt M."/>
            <person name="Kanapin A."/>
            <person name="Katoh M."/>
            <person name="Kawasawa Y."/>
            <person name="Kelso J."/>
            <person name="Kitamura H."/>
            <person name="Kitano H."/>
            <person name="Kollias G."/>
            <person name="Krishnan S.P."/>
            <person name="Kruger A."/>
            <person name="Kummerfeld S.K."/>
            <person name="Kurochkin I.V."/>
            <person name="Lareau L.F."/>
            <person name="Lazarevic D."/>
            <person name="Lipovich L."/>
            <person name="Liu J."/>
            <person name="Liuni S."/>
            <person name="McWilliam S."/>
            <person name="Madan Babu M."/>
            <person name="Madera M."/>
            <person name="Marchionni L."/>
            <person name="Matsuda H."/>
            <person name="Matsuzawa S."/>
            <person name="Miki H."/>
            <person name="Mignone F."/>
            <person name="Miyake S."/>
            <person name="Morris K."/>
            <person name="Mottagui-Tabar S."/>
            <person name="Mulder N."/>
            <person name="Nakano N."/>
            <person name="Nakauchi H."/>
            <person name="Ng P."/>
            <person name="Nilsson R."/>
            <person name="Nishiguchi S."/>
            <person name="Nishikawa S."/>
            <person name="Nori F."/>
            <person name="Ohara O."/>
            <person name="Okazaki Y."/>
            <person name="Orlando V."/>
            <person name="Pang K.C."/>
            <person name="Pavan W.J."/>
            <person name="Pavesi G."/>
            <person name="Pesole G."/>
            <person name="Petrovsky N."/>
            <person name="Piazza S."/>
            <person name="Reed J."/>
            <person name="Reid J.F."/>
            <person name="Ring B.Z."/>
            <person name="Ringwald M."/>
            <person name="Rost B."/>
            <person name="Ruan Y."/>
            <person name="Salzberg S.L."/>
            <person name="Sandelin A."/>
            <person name="Schneider C."/>
            <person name="Schoenbach C."/>
            <person name="Sekiguchi K."/>
            <person name="Semple C.A."/>
            <person name="Seno S."/>
            <person name="Sessa L."/>
            <person name="Sheng Y."/>
            <person name="Shibata Y."/>
            <person name="Shimada H."/>
            <person name="Shimada K."/>
            <person name="Silva D."/>
            <person name="Sinclair B."/>
            <person name="Sperling S."/>
            <person name="Stupka E."/>
            <person name="Sugiura K."/>
            <person name="Sultana R."/>
            <person name="Takenaka Y."/>
            <person name="Taki K."/>
            <person name="Tammoja K."/>
            <person name="Tan S.L."/>
            <person name="Tang S."/>
            <person name="Taylor M.S."/>
            <person name="Tegner J."/>
            <person name="Teichmann S.A."/>
            <person name="Ueda H.R."/>
            <person name="van Nimwegen E."/>
            <person name="Verardo R."/>
            <person name="Wei C.L."/>
            <person name="Yagi K."/>
            <person name="Yamanishi H."/>
            <person name="Zabarovsky E."/>
            <person name="Zhu S."/>
            <person name="Zimmer A."/>
            <person name="Hide W."/>
            <person name="Bult C."/>
            <person name="Grimmond S.M."/>
            <person name="Teasdale R.D."/>
            <person name="Liu E.T."/>
            <person name="Brusic V."/>
            <person name="Quackenbush J."/>
            <person name="Wahlestedt C."/>
            <person name="Mattick J.S."/>
            <person name="Hume D.A."/>
            <person name="Kai C."/>
            <person name="Sasaki D."/>
            <person name="Tomaru Y."/>
            <person name="Fukuda S."/>
            <person name="Kanamori-Katayama M."/>
            <person name="Suzuki M."/>
            <person name="Aoki J."/>
            <person name="Arakawa T."/>
            <person name="Iida J."/>
            <person name="Imamura K."/>
            <person name="Itoh M."/>
            <person name="Kato T."/>
            <person name="Kawaji H."/>
            <person name="Kawagashira N."/>
            <person name="Kawashima T."/>
            <person name="Kojima M."/>
            <person name="Kondo S."/>
            <person name="Konno H."/>
            <person name="Nakano K."/>
            <person name="Ninomiya N."/>
            <person name="Nishio T."/>
            <person name="Okada M."/>
            <person name="Plessy C."/>
            <person name="Shibata K."/>
            <person name="Shiraki T."/>
            <person name="Suzuki S."/>
            <person name="Tagami M."/>
            <person name="Waki K."/>
            <person name="Watahiki A."/>
            <person name="Okamura-Oho Y."/>
            <person name="Suzuki H."/>
            <person name="Kawai J."/>
            <person name="Hayashizaki Y."/>
        </authorList>
    </citation>
    <scope>NUCLEOTIDE SEQUENCE [LARGE SCALE MRNA]</scope>
    <source>
        <strain>C57BL/6J</strain>
        <strain>DBA/2J</strain>
        <tissue>Embryo</tissue>
        <tissue>Heart</tissue>
    </source>
</reference>
<reference key="2">
    <citation type="journal article" date="2009" name="PLoS Biol.">
        <title>Lineage-specific biology revealed by a finished genome assembly of the mouse.</title>
        <authorList>
            <person name="Church D.M."/>
            <person name="Goodstadt L."/>
            <person name="Hillier L.W."/>
            <person name="Zody M.C."/>
            <person name="Goldstein S."/>
            <person name="She X."/>
            <person name="Bult C.J."/>
            <person name="Agarwala R."/>
            <person name="Cherry J.L."/>
            <person name="DiCuccio M."/>
            <person name="Hlavina W."/>
            <person name="Kapustin Y."/>
            <person name="Meric P."/>
            <person name="Maglott D."/>
            <person name="Birtle Z."/>
            <person name="Marques A.C."/>
            <person name="Graves T."/>
            <person name="Zhou S."/>
            <person name="Teague B."/>
            <person name="Potamousis K."/>
            <person name="Churas C."/>
            <person name="Place M."/>
            <person name="Herschleb J."/>
            <person name="Runnheim R."/>
            <person name="Forrest D."/>
            <person name="Amos-Landgraf J."/>
            <person name="Schwartz D.C."/>
            <person name="Cheng Z."/>
            <person name="Lindblad-Toh K."/>
            <person name="Eichler E.E."/>
            <person name="Ponting C.P."/>
        </authorList>
    </citation>
    <scope>NUCLEOTIDE SEQUENCE [LARGE SCALE GENOMIC DNA]</scope>
    <source>
        <strain>C57BL/6J</strain>
    </source>
</reference>
<reference key="3">
    <citation type="journal article" date="2004" name="Genome Res.">
        <title>The status, quality, and expansion of the NIH full-length cDNA project: the Mammalian Gene Collection (MGC).</title>
        <authorList>
            <consortium name="The MGC Project Team"/>
        </authorList>
    </citation>
    <scope>NUCLEOTIDE SEQUENCE [LARGE SCALE MRNA]</scope>
    <source>
        <strain>FVB/N</strain>
        <tissue>Brain</tissue>
        <tissue>Jaw</tissue>
        <tissue>Limb</tissue>
        <tissue>Mammary tumor</tissue>
        <tissue>Molar</tissue>
    </source>
</reference>
<reference key="4">
    <citation type="journal article" date="2010" name="Cell">
        <title>A tissue-specific atlas of mouse protein phosphorylation and expression.</title>
        <authorList>
            <person name="Huttlin E.L."/>
            <person name="Jedrychowski M.P."/>
            <person name="Elias J.E."/>
            <person name="Goswami T."/>
            <person name="Rad R."/>
            <person name="Beausoleil S.A."/>
            <person name="Villen J."/>
            <person name="Haas W."/>
            <person name="Sowa M.E."/>
            <person name="Gygi S.P."/>
        </authorList>
    </citation>
    <scope>IDENTIFICATION BY MASS SPECTROMETRY [LARGE SCALE ANALYSIS]</scope>
    <source>
        <tissue>Brain</tissue>
        <tissue>Brown adipose tissue</tissue>
        <tissue>Heart</tissue>
        <tissue>Kidney</tissue>
        <tissue>Liver</tissue>
        <tissue>Lung</tissue>
        <tissue>Pancreas</tissue>
        <tissue>Spleen</tissue>
        <tissue>Testis</tissue>
    </source>
</reference>
<name>EIF3M_MOUSE</name>
<comment type="function">
    <text evidence="2">Component of the eukaryotic translation initiation factor 3 (eIF-3) complex, which is required for several steps in the initiation of protein synthesis. The eIF-3 complex associates with the 40S ribosome and facilitates the recruitment of eIF-1, eIF-1A, eIF-2:GTP:methionyl-tRNAi and eIF-5 to form the 43S pre-initiation complex (43S PIC). The eIF-3 complex stimulates mRNA recruitment to the 43S PIC and scanning of the mRNA for AUG recognition. The eIF-3 complex is also required for disassembly and recycling of post-termination ribosomal complexes and subsequently prevents premature joining of the 40S and 60S ribosomal subunits prior to initiation. The eIF-3 complex specifically targets and initiates translation of a subset of mRNAs involved in cell proliferation, including cell cycling, differentiation and apoptosis, and uses different modes of RNA stem-loop binding to exert either translational activation or repression.</text>
</comment>
<comment type="subunit">
    <text evidence="2">Component of the eukaryotic translation initiation factor 3 (eIF-3) complex, which is composed of 13 subunits: EIF3A, EIF3B, EIF3C, EIF3D, EIF3E, EIF3F, EIF3G, EIF3H, EIF3I, EIF3J, EIF3K, EIF3L and EIF3M. The eIF-3 complex appears to include 3 stable modules: module A is composed of EIF3A, EIF3B, EIF3G and EIF3I; module B is composed of EIF3F, EIF3H, and EIF3M; and module C is composed of EIF3C, EIF3D, EIF3E, EIF3K and EIF3L. EIF3C of module C binds EIF3B of module A and EIF3H of module B, thereby linking the three modules. EIF3J is a labile subunit that binds to the eIF-3 complex via EIF3B. The eIF-3 complex interacts with RPS6KB1 under conditions of nutrient depletion. Mitogenic stimulation leads to binding and activation of a complex composed of MTOR and RPTOR, leading to phosphorylation and release of RPS6KB1 and binding of EIF4B to eIF-3.</text>
</comment>
<comment type="subcellular location">
    <subcellularLocation>
        <location evidence="2">Cytoplasm</location>
    </subcellularLocation>
</comment>
<comment type="similarity">
    <text evidence="2">Belongs to the eIF-3 subunit M family.</text>
</comment>
<gene>
    <name type="primary">Eif3m</name>
    <name type="synonym">Pcid1</name>
</gene>
<organism>
    <name type="scientific">Mus musculus</name>
    <name type="common">Mouse</name>
    <dbReference type="NCBI Taxonomy" id="10090"/>
    <lineage>
        <taxon>Eukaryota</taxon>
        <taxon>Metazoa</taxon>
        <taxon>Chordata</taxon>
        <taxon>Craniata</taxon>
        <taxon>Vertebrata</taxon>
        <taxon>Euteleostomi</taxon>
        <taxon>Mammalia</taxon>
        <taxon>Eutheria</taxon>
        <taxon>Euarchontoglires</taxon>
        <taxon>Glires</taxon>
        <taxon>Rodentia</taxon>
        <taxon>Myomorpha</taxon>
        <taxon>Muroidea</taxon>
        <taxon>Muridae</taxon>
        <taxon>Murinae</taxon>
        <taxon>Mus</taxon>
        <taxon>Mus</taxon>
    </lineage>
</organism>
<dbReference type="EMBL" id="AK077480">
    <property type="protein sequence ID" value="BAC36821.1"/>
    <property type="molecule type" value="mRNA"/>
</dbReference>
<dbReference type="EMBL" id="AK084738">
    <property type="protein sequence ID" value="BAC39270.1"/>
    <property type="molecule type" value="mRNA"/>
</dbReference>
<dbReference type="EMBL" id="AK146222">
    <property type="protein sequence ID" value="BAE26990.1"/>
    <property type="molecule type" value="mRNA"/>
</dbReference>
<dbReference type="EMBL" id="AK168066">
    <property type="protein sequence ID" value="BAE40042.1"/>
    <property type="molecule type" value="mRNA"/>
</dbReference>
<dbReference type="EMBL" id="AL606494">
    <property type="protein sequence ID" value="CAM17236.1"/>
    <property type="molecule type" value="Genomic_DNA"/>
</dbReference>
<dbReference type="EMBL" id="BC005598">
    <property type="protein sequence ID" value="AAH05598.1"/>
    <property type="molecule type" value="mRNA"/>
</dbReference>
<dbReference type="EMBL" id="BC089568">
    <property type="protein sequence ID" value="AAH89568.1"/>
    <property type="molecule type" value="mRNA"/>
</dbReference>
<dbReference type="EMBL" id="BC103795">
    <property type="protein sequence ID" value="AAI03796.1"/>
    <property type="molecule type" value="mRNA"/>
</dbReference>
<dbReference type="EMBL" id="BC116787">
    <property type="protein sequence ID" value="AAI16788.1"/>
    <property type="molecule type" value="mRNA"/>
</dbReference>
<dbReference type="EMBL" id="BC116789">
    <property type="protein sequence ID" value="AAI16790.1"/>
    <property type="molecule type" value="mRNA"/>
</dbReference>
<dbReference type="CCDS" id="CCDS16495.1"/>
<dbReference type="RefSeq" id="NP_663355.1">
    <property type="nucleotide sequence ID" value="NM_145380.2"/>
</dbReference>
<dbReference type="SMR" id="Q99JX4"/>
<dbReference type="BioGRID" id="221017">
    <property type="interactions" value="21"/>
</dbReference>
<dbReference type="DIP" id="DIP-59784N"/>
<dbReference type="FunCoup" id="Q99JX4">
    <property type="interactions" value="3010"/>
</dbReference>
<dbReference type="IntAct" id="Q99JX4">
    <property type="interactions" value="3"/>
</dbReference>
<dbReference type="STRING" id="10090.ENSMUSP00000028592"/>
<dbReference type="GlyGen" id="Q99JX4">
    <property type="glycosylation" value="1 site, 1 O-linked glycan (1 site)"/>
</dbReference>
<dbReference type="iPTMnet" id="Q99JX4"/>
<dbReference type="PhosphoSitePlus" id="Q99JX4"/>
<dbReference type="SwissPalm" id="Q99JX4"/>
<dbReference type="jPOST" id="Q99JX4"/>
<dbReference type="PaxDb" id="10090-ENSMUSP00000028592"/>
<dbReference type="PeptideAtlas" id="Q99JX4"/>
<dbReference type="ProteomicsDB" id="275656"/>
<dbReference type="Pumba" id="Q99JX4"/>
<dbReference type="Antibodypedia" id="25628">
    <property type="antibodies" value="255 antibodies from 34 providers"/>
</dbReference>
<dbReference type="DNASU" id="98221"/>
<dbReference type="Ensembl" id="ENSMUST00000028592.12">
    <property type="protein sequence ID" value="ENSMUSP00000028592.6"/>
    <property type="gene ID" value="ENSMUSG00000027170.13"/>
</dbReference>
<dbReference type="GeneID" id="98221"/>
<dbReference type="KEGG" id="mmu:98221"/>
<dbReference type="UCSC" id="uc008lkl.1">
    <property type="organism name" value="mouse"/>
</dbReference>
<dbReference type="AGR" id="MGI:1351744"/>
<dbReference type="CTD" id="10480"/>
<dbReference type="MGI" id="MGI:1351744">
    <property type="gene designation" value="Eif3m"/>
</dbReference>
<dbReference type="VEuPathDB" id="HostDB:ENSMUSG00000027170"/>
<dbReference type="eggNOG" id="KOG2753">
    <property type="taxonomic scope" value="Eukaryota"/>
</dbReference>
<dbReference type="GeneTree" id="ENSGT00390000004456"/>
<dbReference type="HOGENOM" id="CLU_035254_1_0_1"/>
<dbReference type="InParanoid" id="Q99JX4"/>
<dbReference type="OMA" id="VCLKALW"/>
<dbReference type="OrthoDB" id="10267031at2759"/>
<dbReference type="PhylomeDB" id="Q99JX4"/>
<dbReference type="TreeFam" id="TF106148"/>
<dbReference type="Reactome" id="R-MMU-156827">
    <property type="pathway name" value="L13a-mediated translational silencing of Ceruloplasmin expression"/>
</dbReference>
<dbReference type="Reactome" id="R-MMU-72649">
    <property type="pathway name" value="Translation initiation complex formation"/>
</dbReference>
<dbReference type="Reactome" id="R-MMU-72689">
    <property type="pathway name" value="Formation of a pool of free 40S subunits"/>
</dbReference>
<dbReference type="Reactome" id="R-MMU-72695">
    <property type="pathway name" value="Formation of the ternary complex, and subsequently, the 43S complex"/>
</dbReference>
<dbReference type="Reactome" id="R-MMU-72702">
    <property type="pathway name" value="Ribosomal scanning and start codon recognition"/>
</dbReference>
<dbReference type="Reactome" id="R-MMU-72706">
    <property type="pathway name" value="GTP hydrolysis and joining of the 60S ribosomal subunit"/>
</dbReference>
<dbReference type="BioGRID-ORCS" id="98221">
    <property type="hits" value="26 hits in 80 CRISPR screens"/>
</dbReference>
<dbReference type="ChiTaRS" id="Eif3m">
    <property type="organism name" value="mouse"/>
</dbReference>
<dbReference type="PRO" id="PR:Q99JX4"/>
<dbReference type="Proteomes" id="UP000000589">
    <property type="component" value="Chromosome 2"/>
</dbReference>
<dbReference type="RNAct" id="Q99JX4">
    <property type="molecule type" value="protein"/>
</dbReference>
<dbReference type="Bgee" id="ENSMUSG00000027170">
    <property type="expression patterns" value="Expressed in epiblast (generic) and 78 other cell types or tissues"/>
</dbReference>
<dbReference type="ExpressionAtlas" id="Q99JX4">
    <property type="expression patterns" value="baseline and differential"/>
</dbReference>
<dbReference type="GO" id="GO:0016282">
    <property type="term" value="C:eukaryotic 43S preinitiation complex"/>
    <property type="evidence" value="ECO:0007669"/>
    <property type="project" value="UniProtKB-UniRule"/>
</dbReference>
<dbReference type="GO" id="GO:0033290">
    <property type="term" value="C:eukaryotic 48S preinitiation complex"/>
    <property type="evidence" value="ECO:0007669"/>
    <property type="project" value="UniProtKB-UniRule"/>
</dbReference>
<dbReference type="GO" id="GO:0071541">
    <property type="term" value="C:eukaryotic translation initiation factor 3 complex, eIF3m"/>
    <property type="evidence" value="ECO:0000314"/>
    <property type="project" value="MGI"/>
</dbReference>
<dbReference type="GO" id="GO:0003743">
    <property type="term" value="F:translation initiation factor activity"/>
    <property type="evidence" value="ECO:0007669"/>
    <property type="project" value="UniProtKB-UniRule"/>
</dbReference>
<dbReference type="GO" id="GO:0031369">
    <property type="term" value="F:translation initiation factor binding"/>
    <property type="evidence" value="ECO:0000314"/>
    <property type="project" value="MGI"/>
</dbReference>
<dbReference type="GO" id="GO:0001732">
    <property type="term" value="P:formation of cytoplasmic translation initiation complex"/>
    <property type="evidence" value="ECO:0007669"/>
    <property type="project" value="UniProtKB-UniRule"/>
</dbReference>
<dbReference type="GO" id="GO:0006412">
    <property type="term" value="P:translation"/>
    <property type="evidence" value="ECO:0000315"/>
    <property type="project" value="MGI"/>
</dbReference>
<dbReference type="HAMAP" id="MF_03012">
    <property type="entry name" value="eIF3m"/>
    <property type="match status" value="1"/>
</dbReference>
<dbReference type="InterPro" id="IPR016024">
    <property type="entry name" value="ARM-type_fold"/>
</dbReference>
<dbReference type="InterPro" id="IPR045237">
    <property type="entry name" value="COPS7/eIF3m"/>
</dbReference>
<dbReference type="InterPro" id="IPR027528">
    <property type="entry name" value="eIF3m"/>
</dbReference>
<dbReference type="InterPro" id="IPR040750">
    <property type="entry name" value="eIF3m_C_helix"/>
</dbReference>
<dbReference type="InterPro" id="IPR000717">
    <property type="entry name" value="PCI_dom"/>
</dbReference>
<dbReference type="InterPro" id="IPR036390">
    <property type="entry name" value="WH_DNA-bd_sf"/>
</dbReference>
<dbReference type="PANTHER" id="PTHR15350">
    <property type="entry name" value="COP9 SIGNALOSOME COMPLEX SUBUNIT 7/DENDRITIC CELL PROTEIN GA17"/>
    <property type="match status" value="1"/>
</dbReference>
<dbReference type="PANTHER" id="PTHR15350:SF2">
    <property type="entry name" value="EUKARYOTIC TRANSLATION INITIATION FACTOR 3 SUBUNIT M"/>
    <property type="match status" value="1"/>
</dbReference>
<dbReference type="Pfam" id="PF18005">
    <property type="entry name" value="eIF3m_C_helix"/>
    <property type="match status" value="1"/>
</dbReference>
<dbReference type="Pfam" id="PF01399">
    <property type="entry name" value="PCI"/>
    <property type="match status" value="1"/>
</dbReference>
<dbReference type="SMART" id="SM00088">
    <property type="entry name" value="PINT"/>
    <property type="match status" value="1"/>
</dbReference>
<dbReference type="SUPFAM" id="SSF48371">
    <property type="entry name" value="ARM repeat"/>
    <property type="match status" value="1"/>
</dbReference>
<dbReference type="SUPFAM" id="SSF46785">
    <property type="entry name" value="Winged helix' DNA-binding domain"/>
    <property type="match status" value="1"/>
</dbReference>
<dbReference type="PROSITE" id="PS50250">
    <property type="entry name" value="PCI"/>
    <property type="match status" value="1"/>
</dbReference>
<keyword id="KW-0007">Acetylation</keyword>
<keyword id="KW-0963">Cytoplasm</keyword>
<keyword id="KW-0396">Initiation factor</keyword>
<keyword id="KW-0597">Phosphoprotein</keyword>
<keyword id="KW-0648">Protein biosynthesis</keyword>
<keyword id="KW-1185">Reference proteome</keyword>
<feature type="initiator methionine" description="Removed" evidence="2">
    <location>
        <position position="1"/>
    </location>
</feature>
<feature type="chain" id="PRO_0000308196" description="Eukaryotic translation initiation factor 3 subunit M">
    <location>
        <begin position="2"/>
        <end position="374"/>
    </location>
</feature>
<feature type="domain" description="PCI" evidence="3">
    <location>
        <begin position="180"/>
        <end position="339"/>
    </location>
</feature>
<feature type="modified residue" description="N-acetylserine" evidence="1 2">
    <location>
        <position position="2"/>
    </location>
</feature>
<feature type="modified residue" description="Phosphoserine" evidence="1">
    <location>
        <position position="2"/>
    </location>
</feature>
<feature type="modified residue" description="Phosphoserine" evidence="1">
    <location>
        <position position="152"/>
    </location>
</feature>
<feature type="modified residue" description="N6-acetyllysine" evidence="1">
    <location>
        <position position="254"/>
    </location>
</feature>
<feature type="modified residue" description="Phosphoserine" evidence="1">
    <location>
        <position position="367"/>
    </location>
</feature>
<feature type="sequence conflict" description="In Ref. 3; AAH89568." evidence="4" ref="3">
    <original>L</original>
    <variation>I</variation>
    <location>
        <position position="29"/>
    </location>
</feature>
<feature type="sequence conflict" description="In Ref. 1; BAE40042." evidence="4" ref="1">
    <original>P</original>
    <variation>Q</variation>
    <location>
        <position position="141"/>
    </location>
</feature>
<feature type="sequence conflict" description="In Ref. 3; AAH89568." evidence="4" ref="3">
    <original>K</original>
    <variation>N</variation>
    <location>
        <position position="155"/>
    </location>
</feature>